<dbReference type="EMBL" id="AL662970">
    <property type="protein sequence ID" value="CAD41755.2"/>
    <property type="molecule type" value="Genomic_DNA"/>
</dbReference>
<dbReference type="EMBL" id="AP008210">
    <property type="protein sequence ID" value="BAF15823.1"/>
    <property type="molecule type" value="Genomic_DNA"/>
</dbReference>
<dbReference type="EMBL" id="AP014960">
    <property type="protein sequence ID" value="BAS91061.1"/>
    <property type="molecule type" value="Genomic_DNA"/>
</dbReference>
<dbReference type="EMBL" id="AK103446">
    <property type="protein sequence ID" value="BAG96085.1"/>
    <property type="molecule type" value="mRNA"/>
</dbReference>
<dbReference type="RefSeq" id="XP_015636765.1">
    <property type="nucleotide sequence ID" value="XM_015781279.1"/>
</dbReference>
<dbReference type="SMR" id="Q7XTT4"/>
<dbReference type="FunCoup" id="Q7XTT4">
    <property type="interactions" value="358"/>
</dbReference>
<dbReference type="STRING" id="39947.Q7XTT4"/>
<dbReference type="PaxDb" id="39947-Q7XTT4"/>
<dbReference type="EnsemblPlants" id="Os04t0620700-01">
    <property type="protein sequence ID" value="Os04t0620700-01"/>
    <property type="gene ID" value="Os04g0620700"/>
</dbReference>
<dbReference type="Gramene" id="Os04t0620700-01">
    <property type="protein sequence ID" value="Os04t0620700-01"/>
    <property type="gene ID" value="Os04g0620700"/>
</dbReference>
<dbReference type="KEGG" id="dosa:Os04g0620700"/>
<dbReference type="eggNOG" id="KOG4210">
    <property type="taxonomic scope" value="Eukaryota"/>
</dbReference>
<dbReference type="HOGENOM" id="CLU_030920_1_0_1"/>
<dbReference type="InParanoid" id="Q7XTT4"/>
<dbReference type="OMA" id="DIHQIRN"/>
<dbReference type="OrthoDB" id="439808at2759"/>
<dbReference type="Proteomes" id="UP000000763">
    <property type="component" value="Chromosome 4"/>
</dbReference>
<dbReference type="Proteomes" id="UP000059680">
    <property type="component" value="Chromosome 4"/>
</dbReference>
<dbReference type="ExpressionAtlas" id="Q7XTT4">
    <property type="expression patterns" value="baseline and differential"/>
</dbReference>
<dbReference type="GO" id="GO:0005730">
    <property type="term" value="C:nucleolus"/>
    <property type="evidence" value="ECO:0000318"/>
    <property type="project" value="GO_Central"/>
</dbReference>
<dbReference type="GO" id="GO:0043024">
    <property type="term" value="F:ribosomal small subunit binding"/>
    <property type="evidence" value="ECO:0000318"/>
    <property type="project" value="GO_Central"/>
</dbReference>
<dbReference type="GO" id="GO:0033592">
    <property type="term" value="F:RNA strand annealing activity"/>
    <property type="evidence" value="ECO:0000318"/>
    <property type="project" value="GO_Central"/>
</dbReference>
<dbReference type="GO" id="GO:0034057">
    <property type="term" value="F:RNA strand-exchange activity"/>
    <property type="evidence" value="ECO:0000318"/>
    <property type="project" value="GO_Central"/>
</dbReference>
<dbReference type="GO" id="GO:0097010">
    <property type="term" value="P:eukaryotic translation initiation factor 4F complex assembly"/>
    <property type="evidence" value="ECO:0000318"/>
    <property type="project" value="GO_Central"/>
</dbReference>
<dbReference type="GO" id="GO:0001731">
    <property type="term" value="P:formation of translation preinitiation complex"/>
    <property type="evidence" value="ECO:0000318"/>
    <property type="project" value="GO_Central"/>
</dbReference>
<dbReference type="GO" id="GO:0006364">
    <property type="term" value="P:rRNA processing"/>
    <property type="evidence" value="ECO:0007669"/>
    <property type="project" value="UniProtKB-KW"/>
</dbReference>
<dbReference type="CDD" id="cd12451">
    <property type="entry name" value="RRM2_NUCLs"/>
    <property type="match status" value="1"/>
</dbReference>
<dbReference type="FunFam" id="3.30.70.330:FF:001006">
    <property type="entry name" value="Nucleolin 2"/>
    <property type="match status" value="1"/>
</dbReference>
<dbReference type="FunFam" id="3.30.70.330:FF:001290">
    <property type="entry name" value="Nucleolin 2"/>
    <property type="match status" value="1"/>
</dbReference>
<dbReference type="Gene3D" id="3.30.70.330">
    <property type="match status" value="2"/>
</dbReference>
<dbReference type="InterPro" id="IPR034350">
    <property type="entry name" value="NUCL_RRM2"/>
</dbReference>
<dbReference type="InterPro" id="IPR012677">
    <property type="entry name" value="Nucleotide-bd_a/b_plait_sf"/>
</dbReference>
<dbReference type="InterPro" id="IPR035979">
    <property type="entry name" value="RBD_domain_sf"/>
</dbReference>
<dbReference type="InterPro" id="IPR000504">
    <property type="entry name" value="RRM_dom"/>
</dbReference>
<dbReference type="PANTHER" id="PTHR23236">
    <property type="entry name" value="EUKARYOTIC TRANSLATION INITIATION FACTOR 4B/4H"/>
    <property type="match status" value="1"/>
</dbReference>
<dbReference type="PANTHER" id="PTHR23236:SF119">
    <property type="entry name" value="NUCLEAR RNA-BINDING PROTEIN SART-3"/>
    <property type="match status" value="1"/>
</dbReference>
<dbReference type="Pfam" id="PF00076">
    <property type="entry name" value="RRM_1"/>
    <property type="match status" value="2"/>
</dbReference>
<dbReference type="SMART" id="SM00360">
    <property type="entry name" value="RRM"/>
    <property type="match status" value="2"/>
</dbReference>
<dbReference type="SUPFAM" id="SSF54928">
    <property type="entry name" value="RNA-binding domain, RBD"/>
    <property type="match status" value="2"/>
</dbReference>
<dbReference type="PROSITE" id="PS50102">
    <property type="entry name" value="RRM"/>
    <property type="match status" value="2"/>
</dbReference>
<gene>
    <name type="ordered locus">Os04g0620700</name>
    <name type="ordered locus">LOC_Os04g52960</name>
    <name type="ORF">OSJNBa0058K23.21</name>
</gene>
<feature type="chain" id="PRO_0000417404" description="Nucleolin 2">
    <location>
        <begin position="1"/>
        <end position="707"/>
    </location>
</feature>
<feature type="domain" description="RRM 1" evidence="2">
    <location>
        <begin position="449"/>
        <end position="525"/>
    </location>
</feature>
<feature type="domain" description="RRM 2" evidence="2">
    <location>
        <begin position="549"/>
        <end position="630"/>
    </location>
</feature>
<feature type="region of interest" description="Disordered" evidence="3">
    <location>
        <begin position="1"/>
        <end position="446"/>
    </location>
</feature>
<feature type="region of interest" description="Disordered" evidence="3">
    <location>
        <begin position="527"/>
        <end position="546"/>
    </location>
</feature>
<feature type="region of interest" description="Disordered" evidence="3">
    <location>
        <begin position="629"/>
        <end position="707"/>
    </location>
</feature>
<feature type="compositionally biased region" description="Basic and acidic residues" evidence="3">
    <location>
        <begin position="30"/>
        <end position="40"/>
    </location>
</feature>
<feature type="compositionally biased region" description="Basic and acidic residues" evidence="3">
    <location>
        <begin position="47"/>
        <end position="60"/>
    </location>
</feature>
<feature type="compositionally biased region" description="Acidic residues" evidence="3">
    <location>
        <begin position="75"/>
        <end position="85"/>
    </location>
</feature>
<feature type="compositionally biased region" description="Acidic residues" evidence="3">
    <location>
        <begin position="108"/>
        <end position="120"/>
    </location>
</feature>
<feature type="compositionally biased region" description="Acidic residues" evidence="3">
    <location>
        <begin position="144"/>
        <end position="153"/>
    </location>
</feature>
<feature type="compositionally biased region" description="Low complexity" evidence="3">
    <location>
        <begin position="158"/>
        <end position="170"/>
    </location>
</feature>
<feature type="compositionally biased region" description="Acidic residues" evidence="3">
    <location>
        <begin position="219"/>
        <end position="232"/>
    </location>
</feature>
<feature type="compositionally biased region" description="Acidic residues" evidence="3">
    <location>
        <begin position="248"/>
        <end position="263"/>
    </location>
</feature>
<feature type="compositionally biased region" description="Acidic residues" evidence="3">
    <location>
        <begin position="271"/>
        <end position="287"/>
    </location>
</feature>
<feature type="compositionally biased region" description="Basic and acidic residues" evidence="3">
    <location>
        <begin position="300"/>
        <end position="311"/>
    </location>
</feature>
<feature type="compositionally biased region" description="Acidic residues" evidence="3">
    <location>
        <begin position="312"/>
        <end position="326"/>
    </location>
</feature>
<feature type="compositionally biased region" description="Low complexity" evidence="3">
    <location>
        <begin position="336"/>
        <end position="347"/>
    </location>
</feature>
<feature type="compositionally biased region" description="Acidic residues" evidence="3">
    <location>
        <begin position="355"/>
        <end position="370"/>
    </location>
</feature>
<feature type="compositionally biased region" description="Low complexity" evidence="3">
    <location>
        <begin position="376"/>
        <end position="394"/>
    </location>
</feature>
<feature type="compositionally biased region" description="Acidic residues" evidence="3">
    <location>
        <begin position="395"/>
        <end position="406"/>
    </location>
</feature>
<feature type="compositionally biased region" description="Basic and acidic residues" evidence="3">
    <location>
        <begin position="407"/>
        <end position="417"/>
    </location>
</feature>
<feature type="compositionally biased region" description="Polar residues" evidence="3">
    <location>
        <begin position="420"/>
        <end position="429"/>
    </location>
</feature>
<feature type="compositionally biased region" description="Basic and acidic residues" evidence="3">
    <location>
        <begin position="657"/>
        <end position="681"/>
    </location>
</feature>
<proteinExistence type="evidence at transcript level"/>
<reference key="1">
    <citation type="journal article" date="2002" name="Nature">
        <title>Sequence and analysis of rice chromosome 4.</title>
        <authorList>
            <person name="Feng Q."/>
            <person name="Zhang Y."/>
            <person name="Hao P."/>
            <person name="Wang S."/>
            <person name="Fu G."/>
            <person name="Huang Y."/>
            <person name="Li Y."/>
            <person name="Zhu J."/>
            <person name="Liu Y."/>
            <person name="Hu X."/>
            <person name="Jia P."/>
            <person name="Zhang Y."/>
            <person name="Zhao Q."/>
            <person name="Ying K."/>
            <person name="Yu S."/>
            <person name="Tang Y."/>
            <person name="Weng Q."/>
            <person name="Zhang L."/>
            <person name="Lu Y."/>
            <person name="Mu J."/>
            <person name="Lu Y."/>
            <person name="Zhang L.S."/>
            <person name="Yu Z."/>
            <person name="Fan D."/>
            <person name="Liu X."/>
            <person name="Lu T."/>
            <person name="Li C."/>
            <person name="Wu Y."/>
            <person name="Sun T."/>
            <person name="Lei H."/>
            <person name="Li T."/>
            <person name="Hu H."/>
            <person name="Guan J."/>
            <person name="Wu M."/>
            <person name="Zhang R."/>
            <person name="Zhou B."/>
            <person name="Chen Z."/>
            <person name="Chen L."/>
            <person name="Jin Z."/>
            <person name="Wang R."/>
            <person name="Yin H."/>
            <person name="Cai Z."/>
            <person name="Ren S."/>
            <person name="Lv G."/>
            <person name="Gu W."/>
            <person name="Zhu G."/>
            <person name="Tu Y."/>
            <person name="Jia J."/>
            <person name="Zhang Y."/>
            <person name="Chen J."/>
            <person name="Kang H."/>
            <person name="Chen X."/>
            <person name="Shao C."/>
            <person name="Sun Y."/>
            <person name="Hu Q."/>
            <person name="Zhang X."/>
            <person name="Zhang W."/>
            <person name="Wang L."/>
            <person name="Ding C."/>
            <person name="Sheng H."/>
            <person name="Gu J."/>
            <person name="Chen S."/>
            <person name="Ni L."/>
            <person name="Zhu F."/>
            <person name="Chen W."/>
            <person name="Lan L."/>
            <person name="Lai Y."/>
            <person name="Cheng Z."/>
            <person name="Gu M."/>
            <person name="Jiang J."/>
            <person name="Li J."/>
            <person name="Hong G."/>
            <person name="Xue Y."/>
            <person name="Han B."/>
        </authorList>
    </citation>
    <scope>NUCLEOTIDE SEQUENCE [LARGE SCALE GENOMIC DNA]</scope>
    <source>
        <strain>cv. Nipponbare</strain>
    </source>
</reference>
<reference key="2">
    <citation type="journal article" date="2005" name="Nature">
        <title>The map-based sequence of the rice genome.</title>
        <authorList>
            <consortium name="International rice genome sequencing project (IRGSP)"/>
        </authorList>
    </citation>
    <scope>NUCLEOTIDE SEQUENCE [LARGE SCALE GENOMIC DNA]</scope>
    <source>
        <strain>cv. Nipponbare</strain>
    </source>
</reference>
<reference key="3">
    <citation type="journal article" date="2008" name="Nucleic Acids Res.">
        <title>The rice annotation project database (RAP-DB): 2008 update.</title>
        <authorList>
            <consortium name="The rice annotation project (RAP)"/>
        </authorList>
    </citation>
    <scope>GENOME REANNOTATION</scope>
    <source>
        <strain>cv. Nipponbare</strain>
    </source>
</reference>
<reference key="4">
    <citation type="journal article" date="2013" name="Rice">
        <title>Improvement of the Oryza sativa Nipponbare reference genome using next generation sequence and optical map data.</title>
        <authorList>
            <person name="Kawahara Y."/>
            <person name="de la Bastide M."/>
            <person name="Hamilton J.P."/>
            <person name="Kanamori H."/>
            <person name="McCombie W.R."/>
            <person name="Ouyang S."/>
            <person name="Schwartz D.C."/>
            <person name="Tanaka T."/>
            <person name="Wu J."/>
            <person name="Zhou S."/>
            <person name="Childs K.L."/>
            <person name="Davidson R.M."/>
            <person name="Lin H."/>
            <person name="Quesada-Ocampo L."/>
            <person name="Vaillancourt B."/>
            <person name="Sakai H."/>
            <person name="Lee S.S."/>
            <person name="Kim J."/>
            <person name="Numa H."/>
            <person name="Itoh T."/>
            <person name="Buell C.R."/>
            <person name="Matsumoto T."/>
        </authorList>
    </citation>
    <scope>GENOME REANNOTATION</scope>
    <source>
        <strain>cv. Nipponbare</strain>
    </source>
</reference>
<reference key="5">
    <citation type="journal article" date="2003" name="Science">
        <title>Collection, mapping, and annotation of over 28,000 cDNA clones from japonica rice.</title>
        <authorList>
            <consortium name="The rice full-length cDNA consortium"/>
        </authorList>
    </citation>
    <scope>NUCLEOTIDE SEQUENCE [LARGE SCALE MRNA]</scope>
    <source>
        <strain>cv. Nipponbare</strain>
    </source>
</reference>
<sequence length="707" mass="75253">MGKSSKKSAVEVAPTSVSVSEGKSGKKGKRNAEDEIEKAVSAKKQKTVREKVVPSKEEAKKVKKQPPPKKVESSSSEEDSSESEEEVKAQPKKTVQPKKAAQPAKEESSDDSSDDSSSDDEPAKKPVARPNKAALSTNSSSSDDSSDESLSDDEPVKKPAAPLKKPVALATNGSKKVETDSSSSDSSSDEESDEDDKKTAAPVKKPSVAAIQKKTQESDSSDSDSDSESDEDVPTKAPAVAKKKEESSESSDSESDSDSDDEAAAVKKEEESSDSSDSDSESESDSDEPAKPTIPAKRPLTKDTKKGQSKDESEDSSDESSEESGDEPPQKKIKDSTTSGTTKPSPKATKKEISSDDESDEDDSSDESSDEDVKQKQTQAKKQAPVAQESSSSDESSEEDSDMESDEPAKTPQKKETAVSVGSNKSATKPGQEEPKTPASNQNQATGSKTLFVGNLPYNVEQEQVKQFFQEAGEVVDIRFSTFEDGNFRGFGHVEFATAEAAKKALELAGHDLMGRPVRLDLARERGAYTPGSGRDNSSFKKPAQSSGNTIFIKGFDTSLDIHQIRNSLEEHFGSCGEITRVSIPKDYETGASKGMAYMDFADNGSLSKAYELNGSDLGGYSLYVDEARPRPDNNREGGFSGGRDFNSSGRGGRRGGRGDGSRGRGDRGRGRGFGRGDRGHGGRGTPFKQSAGTPSAGKKTTFGDDD</sequence>
<organism>
    <name type="scientific">Oryza sativa subsp. japonica</name>
    <name type="common">Rice</name>
    <dbReference type="NCBI Taxonomy" id="39947"/>
    <lineage>
        <taxon>Eukaryota</taxon>
        <taxon>Viridiplantae</taxon>
        <taxon>Streptophyta</taxon>
        <taxon>Embryophyta</taxon>
        <taxon>Tracheophyta</taxon>
        <taxon>Spermatophyta</taxon>
        <taxon>Magnoliopsida</taxon>
        <taxon>Liliopsida</taxon>
        <taxon>Poales</taxon>
        <taxon>Poaceae</taxon>
        <taxon>BOP clade</taxon>
        <taxon>Oryzoideae</taxon>
        <taxon>Oryzeae</taxon>
        <taxon>Oryzinae</taxon>
        <taxon>Oryza</taxon>
        <taxon>Oryza sativa</taxon>
    </lineage>
</organism>
<keyword id="KW-0539">Nucleus</keyword>
<keyword id="KW-1185">Reference proteome</keyword>
<keyword id="KW-0677">Repeat</keyword>
<keyword id="KW-0694">RNA-binding</keyword>
<keyword id="KW-0698">rRNA processing</keyword>
<evidence type="ECO:0000250" key="1"/>
<evidence type="ECO:0000255" key="2">
    <source>
        <dbReference type="PROSITE-ProRule" id="PRU00176"/>
    </source>
</evidence>
<evidence type="ECO:0000256" key="3">
    <source>
        <dbReference type="SAM" id="MobiDB-lite"/>
    </source>
</evidence>
<protein>
    <recommendedName>
        <fullName>Nucleolin 2</fullName>
    </recommendedName>
    <alternativeName>
        <fullName>Protein NUCLEOLIN LIKE 2</fullName>
    </alternativeName>
</protein>
<accession>Q7XTT4</accession>
<accession>A0A0P0WEX5</accession>
<name>NUCL2_ORYSJ</name>
<comment type="function">
    <text evidence="1">Involved in pre-rRNA processing and ribosome assembly.</text>
</comment>
<comment type="subcellular location">
    <subcellularLocation>
        <location evidence="1">Nucleus</location>
        <location evidence="1">Nucleolus</location>
    </subcellularLocation>
</comment>